<accession>B1IQN9</accession>
<proteinExistence type="inferred from homology"/>
<name>AAEB_ECOLC</name>
<protein>
    <recommendedName>
        <fullName evidence="1">p-hydroxybenzoic acid efflux pump subunit AaeB</fullName>
        <shortName evidence="1">pHBA efflux pump protein B</shortName>
    </recommendedName>
</protein>
<organism>
    <name type="scientific">Escherichia coli (strain ATCC 8739 / DSM 1576 / NBRC 3972 / NCIMB 8545 / WDCM 00012 / Crooks)</name>
    <dbReference type="NCBI Taxonomy" id="481805"/>
    <lineage>
        <taxon>Bacteria</taxon>
        <taxon>Pseudomonadati</taxon>
        <taxon>Pseudomonadota</taxon>
        <taxon>Gammaproteobacteria</taxon>
        <taxon>Enterobacterales</taxon>
        <taxon>Enterobacteriaceae</taxon>
        <taxon>Escherichia</taxon>
    </lineage>
</organism>
<feature type="chain" id="PRO_1000087664" description="p-hydroxybenzoic acid efflux pump subunit AaeB">
    <location>
        <begin position="1"/>
        <end position="655"/>
    </location>
</feature>
<feature type="transmembrane region" description="Helical" evidence="1">
    <location>
        <begin position="13"/>
        <end position="33"/>
    </location>
</feature>
<feature type="transmembrane region" description="Helical" evidence="1">
    <location>
        <begin position="38"/>
        <end position="58"/>
    </location>
</feature>
<feature type="transmembrane region" description="Helical" evidence="1">
    <location>
        <begin position="69"/>
        <end position="89"/>
    </location>
</feature>
<feature type="transmembrane region" description="Helical" evidence="1">
    <location>
        <begin position="93"/>
        <end position="113"/>
    </location>
</feature>
<feature type="transmembrane region" description="Helical" evidence="1">
    <location>
        <begin position="121"/>
        <end position="141"/>
    </location>
</feature>
<feature type="transmembrane region" description="Helical" evidence="1">
    <location>
        <begin position="152"/>
        <end position="172"/>
    </location>
</feature>
<feature type="transmembrane region" description="Helical" evidence="1">
    <location>
        <begin position="370"/>
        <end position="390"/>
    </location>
</feature>
<feature type="transmembrane region" description="Helical" evidence="1">
    <location>
        <begin position="407"/>
        <end position="427"/>
    </location>
</feature>
<feature type="transmembrane region" description="Helical" evidence="1">
    <location>
        <begin position="431"/>
        <end position="451"/>
    </location>
</feature>
<feature type="transmembrane region" description="Helical" evidence="1">
    <location>
        <begin position="459"/>
        <end position="479"/>
    </location>
</feature>
<feature type="transmembrane region" description="Helical" evidence="1">
    <location>
        <begin position="482"/>
        <end position="502"/>
    </location>
</feature>
<dbReference type="EMBL" id="CP000946">
    <property type="protein sequence ID" value="ACA76143.1"/>
    <property type="molecule type" value="Genomic_DNA"/>
</dbReference>
<dbReference type="RefSeq" id="WP_000510962.1">
    <property type="nucleotide sequence ID" value="NZ_MTFT01000027.1"/>
</dbReference>
<dbReference type="SMR" id="B1IQN9"/>
<dbReference type="GeneID" id="75206090"/>
<dbReference type="KEGG" id="ecl:EcolC_0466"/>
<dbReference type="HOGENOM" id="CLU_027647_0_0_6"/>
<dbReference type="GO" id="GO:0005886">
    <property type="term" value="C:plasma membrane"/>
    <property type="evidence" value="ECO:0007669"/>
    <property type="project" value="UniProtKB-SubCell"/>
</dbReference>
<dbReference type="GO" id="GO:0022857">
    <property type="term" value="F:transmembrane transporter activity"/>
    <property type="evidence" value="ECO:0007669"/>
    <property type="project" value="UniProtKB-UniRule"/>
</dbReference>
<dbReference type="GO" id="GO:0046942">
    <property type="term" value="P:carboxylic acid transport"/>
    <property type="evidence" value="ECO:0007669"/>
    <property type="project" value="InterPro"/>
</dbReference>
<dbReference type="HAMAP" id="MF_01545">
    <property type="entry name" value="AaeB"/>
    <property type="match status" value="1"/>
</dbReference>
<dbReference type="InterPro" id="IPR006726">
    <property type="entry name" value="PHBA_efflux_AaeB/fusaric-R"/>
</dbReference>
<dbReference type="InterPro" id="IPR023706">
    <property type="entry name" value="PHBA_efflux_pump_AaeB"/>
</dbReference>
<dbReference type="NCBIfam" id="NF007916">
    <property type="entry name" value="PRK10631.1"/>
    <property type="match status" value="1"/>
</dbReference>
<dbReference type="PANTHER" id="PTHR30509:SF9">
    <property type="entry name" value="MULTIDRUG RESISTANCE PROTEIN MDTO"/>
    <property type="match status" value="1"/>
</dbReference>
<dbReference type="PANTHER" id="PTHR30509">
    <property type="entry name" value="P-HYDROXYBENZOIC ACID EFFLUX PUMP SUBUNIT-RELATED"/>
    <property type="match status" value="1"/>
</dbReference>
<dbReference type="Pfam" id="PF04632">
    <property type="entry name" value="FUSC"/>
    <property type="match status" value="1"/>
</dbReference>
<reference key="1">
    <citation type="submission" date="2008-02" db="EMBL/GenBank/DDBJ databases">
        <title>Complete sequence of Escherichia coli C str. ATCC 8739.</title>
        <authorList>
            <person name="Copeland A."/>
            <person name="Lucas S."/>
            <person name="Lapidus A."/>
            <person name="Glavina del Rio T."/>
            <person name="Dalin E."/>
            <person name="Tice H."/>
            <person name="Bruce D."/>
            <person name="Goodwin L."/>
            <person name="Pitluck S."/>
            <person name="Kiss H."/>
            <person name="Brettin T."/>
            <person name="Detter J.C."/>
            <person name="Han C."/>
            <person name="Kuske C.R."/>
            <person name="Schmutz J."/>
            <person name="Larimer F."/>
            <person name="Land M."/>
            <person name="Hauser L."/>
            <person name="Kyrpides N."/>
            <person name="Mikhailova N."/>
            <person name="Ingram L."/>
            <person name="Richardson P."/>
        </authorList>
    </citation>
    <scope>NUCLEOTIDE SEQUENCE [LARGE SCALE GENOMIC DNA]</scope>
    <source>
        <strain>ATCC 8739 / DSM 1576 / NBRC 3972 / NCIMB 8545 / WDCM 00012 / Crooks</strain>
    </source>
</reference>
<comment type="function">
    <text evidence="1">Forms an efflux pump with AaeA. Could function as a metabolic relief valve, allowing to eliminate certain compounds when they accumulate to high levels in the cell.</text>
</comment>
<comment type="subcellular location">
    <subcellularLocation>
        <location evidence="1">Cell inner membrane</location>
        <topology evidence="1">Multi-pass membrane protein</topology>
    </subcellularLocation>
</comment>
<comment type="induction">
    <text evidence="1">Positively coregulated with aaeA and aaeX by AaeR.</text>
</comment>
<comment type="similarity">
    <text evidence="1">Belongs to the aromatic acid exporter ArAE (TC 2.A.85) family.</text>
</comment>
<sequence length="655" mass="73611">MGIFSIANQHIRFAVKLATAIVLALFVGFHFQLETPRWAVLTAAIVAAGPAFAAGGEPYSGAIRYRGFLRIIGTFIGCIAGLVIIIAMIRAPLLMILVCCIWAGFCTWISSLVRIENSYAWGLAGYTALIIVITIQPEPLLTPQFAVERCSEIVIGIVCAIMADLLFSPRSIKQEVDRELESLLVAQYQLMQLCIKHGDGEVVDKAWGDLVRRTTALQGMRSNLNMESSRWARANRRLKAINTLSLTLITQSCETYLIQNTRPELITDTFREFFDTPVETAQDVHKQLKRLRRVIAWTGERETPVTIYSWVAAATRYQLLKRGVISNTKINATEEEILQGEPEVKVESAERHHAMVNFWRTTLSCILGTLFWLWTGWTSGSGAMVMIAVVTSLAMRLPNPRMVAIDFIYGTLAALPLGLLYFLVIIPNTQQSMLLLCISLAVLGFFLGIEVQKRRLGSMGALASTINIIVLDNPMTFHFSQFLDSALGQIVGCVLAFTVILLVRDKSRDRTGRVLLNQFVSAAVSAMTTNVARRKENHLPALYQQLFLLMNKFPGDLPKFRLALTMIIAHQRLRDAPIPVNEDLSAFHRQMRRTADHVISARSDDKRRRYFGQLLEELEIYQEKLRIWQAPPQVTEPVHRLAGMLHKYQHALTDS</sequence>
<keyword id="KW-0997">Cell inner membrane</keyword>
<keyword id="KW-1003">Cell membrane</keyword>
<keyword id="KW-0472">Membrane</keyword>
<keyword id="KW-0812">Transmembrane</keyword>
<keyword id="KW-1133">Transmembrane helix</keyword>
<keyword id="KW-0813">Transport</keyword>
<evidence type="ECO:0000255" key="1">
    <source>
        <dbReference type="HAMAP-Rule" id="MF_01545"/>
    </source>
</evidence>
<gene>
    <name evidence="1" type="primary">aaeB</name>
    <name type="ordered locus">EcolC_0466</name>
</gene>